<name>PSBJ_SACHY</name>
<evidence type="ECO:0000255" key="1">
    <source>
        <dbReference type="HAMAP-Rule" id="MF_01305"/>
    </source>
</evidence>
<comment type="function">
    <text evidence="1">One of the components of the core complex of photosystem II (PSII). PSII is a light-driven water:plastoquinone oxidoreductase that uses light energy to abstract electrons from H(2)O, generating O(2) and a proton gradient subsequently used for ATP formation. It consists of a core antenna complex that captures photons, and an electron transfer chain that converts photonic excitation into a charge separation.</text>
</comment>
<comment type="subunit">
    <text evidence="1">PSII is composed of 1 copy each of membrane proteins PsbA, PsbB, PsbC, PsbD, PsbE, PsbF, PsbH, PsbI, PsbJ, PsbK, PsbL, PsbM, PsbT, PsbX, PsbY, PsbZ, Psb30/Ycf12, at least 3 peripheral proteins of the oxygen-evolving complex and a large number of cofactors. It forms dimeric complexes.</text>
</comment>
<comment type="subcellular location">
    <subcellularLocation>
        <location evidence="1">Plastid</location>
        <location evidence="1">Chloroplast thylakoid membrane</location>
        <topology evidence="1">Single-pass membrane protein</topology>
    </subcellularLocation>
</comment>
<comment type="similarity">
    <text evidence="1">Belongs to the PsbJ family.</text>
</comment>
<organism>
    <name type="scientific">Saccharum hybrid</name>
    <name type="common">Sugarcane</name>
    <dbReference type="NCBI Taxonomy" id="15819"/>
    <lineage>
        <taxon>Eukaryota</taxon>
        <taxon>Viridiplantae</taxon>
        <taxon>Streptophyta</taxon>
        <taxon>Embryophyta</taxon>
        <taxon>Tracheophyta</taxon>
        <taxon>Spermatophyta</taxon>
        <taxon>Magnoliopsida</taxon>
        <taxon>Liliopsida</taxon>
        <taxon>Poales</taxon>
        <taxon>Poaceae</taxon>
        <taxon>PACMAD clade</taxon>
        <taxon>Panicoideae</taxon>
        <taxon>Andropogonodae</taxon>
        <taxon>Andropogoneae</taxon>
        <taxon>Saccharinae</taxon>
        <taxon>Saccharum</taxon>
    </lineage>
</organism>
<protein>
    <recommendedName>
        <fullName evidence="1">Photosystem II reaction center protein J</fullName>
        <shortName evidence="1">PSII-J</shortName>
    </recommendedName>
</protein>
<proteinExistence type="inferred from homology"/>
<accession>Q6L386</accession>
<reference key="1">
    <citation type="journal article" date="2004" name="Curr. Genet.">
        <title>Structural features and transcript-editing analysis of sugarcane (Saccharum officinarum L.) chloroplast genome.</title>
        <authorList>
            <person name="Calsa T. Jr."/>
            <person name="Carraro D.M."/>
            <person name="Benatti M.R."/>
            <person name="Barbosa A.C."/>
            <person name="Kitajima J.P."/>
            <person name="Carrer H."/>
        </authorList>
    </citation>
    <scope>NUCLEOTIDE SEQUENCE [LARGE SCALE GENOMIC DNA]</scope>
    <source>
        <strain>cv. SP-80-3280</strain>
    </source>
</reference>
<sequence>MADTTGRIPLWLIGTVTGILVIGLIGVFFYGSYSGLGSSL</sequence>
<feature type="chain" id="PRO_0000216616" description="Photosystem II reaction center protein J">
    <location>
        <begin position="1"/>
        <end position="40"/>
    </location>
</feature>
<feature type="transmembrane region" description="Helical" evidence="1">
    <location>
        <begin position="8"/>
        <end position="28"/>
    </location>
</feature>
<dbReference type="EMBL" id="AE009947">
    <property type="protein sequence ID" value="AAT44706.1"/>
    <property type="molecule type" value="Genomic_DNA"/>
</dbReference>
<dbReference type="SMR" id="Q6L386"/>
<dbReference type="GO" id="GO:0009535">
    <property type="term" value="C:chloroplast thylakoid membrane"/>
    <property type="evidence" value="ECO:0007669"/>
    <property type="project" value="UniProtKB-SubCell"/>
</dbReference>
<dbReference type="GO" id="GO:0009539">
    <property type="term" value="C:photosystem II reaction center"/>
    <property type="evidence" value="ECO:0007669"/>
    <property type="project" value="InterPro"/>
</dbReference>
<dbReference type="GO" id="GO:0015979">
    <property type="term" value="P:photosynthesis"/>
    <property type="evidence" value="ECO:0007669"/>
    <property type="project" value="UniProtKB-UniRule"/>
</dbReference>
<dbReference type="Gene3D" id="6.10.250.2070">
    <property type="match status" value="1"/>
</dbReference>
<dbReference type="HAMAP" id="MF_01305">
    <property type="entry name" value="PSII_PsbJ"/>
    <property type="match status" value="1"/>
</dbReference>
<dbReference type="InterPro" id="IPR002682">
    <property type="entry name" value="PSII_PsbJ"/>
</dbReference>
<dbReference type="InterPro" id="IPR037267">
    <property type="entry name" value="PSII_PsbJ_sf"/>
</dbReference>
<dbReference type="NCBIfam" id="NF002722">
    <property type="entry name" value="PRK02565.1"/>
    <property type="match status" value="1"/>
</dbReference>
<dbReference type="PANTHER" id="PTHR34812">
    <property type="entry name" value="PHOTOSYSTEM II REACTION CENTER PROTEIN J"/>
    <property type="match status" value="1"/>
</dbReference>
<dbReference type="PANTHER" id="PTHR34812:SF3">
    <property type="entry name" value="PHOTOSYSTEM II REACTION CENTER PROTEIN J"/>
    <property type="match status" value="1"/>
</dbReference>
<dbReference type="Pfam" id="PF01788">
    <property type="entry name" value="PsbJ"/>
    <property type="match status" value="1"/>
</dbReference>
<dbReference type="SUPFAM" id="SSF161021">
    <property type="entry name" value="Photosystem II reaction center protein J, PsbJ"/>
    <property type="match status" value="1"/>
</dbReference>
<geneLocation type="chloroplast"/>
<gene>
    <name evidence="1" type="primary">psbJ</name>
    <name type="ordered locus">PS137</name>
</gene>
<keyword id="KW-0150">Chloroplast</keyword>
<keyword id="KW-0472">Membrane</keyword>
<keyword id="KW-0602">Photosynthesis</keyword>
<keyword id="KW-0604">Photosystem II</keyword>
<keyword id="KW-0934">Plastid</keyword>
<keyword id="KW-0674">Reaction center</keyword>
<keyword id="KW-0793">Thylakoid</keyword>
<keyword id="KW-0812">Transmembrane</keyword>
<keyword id="KW-1133">Transmembrane helix</keyword>